<organism>
    <name type="scientific">Mycoplasmopsis synoviae (strain 53)</name>
    <name type="common">Mycoplasma synoviae</name>
    <dbReference type="NCBI Taxonomy" id="262723"/>
    <lineage>
        <taxon>Bacteria</taxon>
        <taxon>Bacillati</taxon>
        <taxon>Mycoplasmatota</taxon>
        <taxon>Mycoplasmoidales</taxon>
        <taxon>Metamycoplasmataceae</taxon>
        <taxon>Mycoplasmopsis</taxon>
    </lineage>
</organism>
<evidence type="ECO:0000255" key="1">
    <source>
        <dbReference type="HAMAP-Rule" id="MF_00815"/>
    </source>
</evidence>
<name>ATPG_MYCS5</name>
<reference key="1">
    <citation type="journal article" date="2005" name="J. Bacteriol.">
        <title>Swine and poultry pathogens: the complete genome sequences of two strains of Mycoplasma hyopneumoniae and a strain of Mycoplasma synoviae.</title>
        <authorList>
            <person name="Vasconcelos A.T.R."/>
            <person name="Ferreira H.B."/>
            <person name="Bizarro C.V."/>
            <person name="Bonatto S.L."/>
            <person name="Carvalho M.O."/>
            <person name="Pinto P.M."/>
            <person name="Almeida D.F."/>
            <person name="Almeida L.G.P."/>
            <person name="Almeida R."/>
            <person name="Alves-Junior L."/>
            <person name="Assuncao E.N."/>
            <person name="Azevedo V.A.C."/>
            <person name="Bogo M.R."/>
            <person name="Brigido M.M."/>
            <person name="Brocchi M."/>
            <person name="Burity H.A."/>
            <person name="Camargo A.A."/>
            <person name="Camargo S.S."/>
            <person name="Carepo M.S."/>
            <person name="Carraro D.M."/>
            <person name="de Mattos Cascardo J.C."/>
            <person name="Castro L.A."/>
            <person name="Cavalcanti G."/>
            <person name="Chemale G."/>
            <person name="Collevatti R.G."/>
            <person name="Cunha C.W."/>
            <person name="Dallagiovanna B."/>
            <person name="Dambros B.P."/>
            <person name="Dellagostin O.A."/>
            <person name="Falcao C."/>
            <person name="Fantinatti-Garboggini F."/>
            <person name="Felipe M.S.S."/>
            <person name="Fiorentin L."/>
            <person name="Franco G.R."/>
            <person name="Freitas N.S.A."/>
            <person name="Frias D."/>
            <person name="Grangeiro T.B."/>
            <person name="Grisard E.C."/>
            <person name="Guimaraes C.T."/>
            <person name="Hungria M."/>
            <person name="Jardim S.N."/>
            <person name="Krieger M.A."/>
            <person name="Laurino J.P."/>
            <person name="Lima L.F.A."/>
            <person name="Lopes M.I."/>
            <person name="Loreto E.L.S."/>
            <person name="Madeira H.M.F."/>
            <person name="Manfio G.P."/>
            <person name="Maranhao A.Q."/>
            <person name="Martinkovics C.T."/>
            <person name="Medeiros S.R.B."/>
            <person name="Moreira M.A.M."/>
            <person name="Neiva M."/>
            <person name="Ramalho-Neto C.E."/>
            <person name="Nicolas M.F."/>
            <person name="Oliveira S.C."/>
            <person name="Paixao R.F.C."/>
            <person name="Pedrosa F.O."/>
            <person name="Pena S.D.J."/>
            <person name="Pereira M."/>
            <person name="Pereira-Ferrari L."/>
            <person name="Piffer I."/>
            <person name="Pinto L.S."/>
            <person name="Potrich D.P."/>
            <person name="Salim A.C.M."/>
            <person name="Santos F.R."/>
            <person name="Schmitt R."/>
            <person name="Schneider M.P.C."/>
            <person name="Schrank A."/>
            <person name="Schrank I.S."/>
            <person name="Schuck A.F."/>
            <person name="Seuanez H.N."/>
            <person name="Silva D.W."/>
            <person name="Silva R."/>
            <person name="Silva S.C."/>
            <person name="Soares C.M.A."/>
            <person name="Souza K.R.L."/>
            <person name="Souza R.C."/>
            <person name="Staats C.C."/>
            <person name="Steffens M.B.R."/>
            <person name="Teixeira S.M.R."/>
            <person name="Urmenyi T.P."/>
            <person name="Vainstein M.H."/>
            <person name="Zuccherato L.W."/>
            <person name="Simpson A.J.G."/>
            <person name="Zaha A."/>
        </authorList>
    </citation>
    <scope>NUCLEOTIDE SEQUENCE [LARGE SCALE GENOMIC DNA]</scope>
    <source>
        <strain>53</strain>
    </source>
</reference>
<protein>
    <recommendedName>
        <fullName evidence="1">ATP synthase gamma chain</fullName>
    </recommendedName>
    <alternativeName>
        <fullName evidence="1">ATP synthase F1 sector gamma subunit</fullName>
    </alternativeName>
    <alternativeName>
        <fullName evidence="1">F-ATPase gamma subunit</fullName>
    </alternativeName>
</protein>
<feature type="chain" id="PRO_0000073326" description="ATP synthase gamma chain">
    <location>
        <begin position="1"/>
        <end position="289"/>
    </location>
</feature>
<sequence length="289" mass="32746">MSNLINIKNRINVVTNTRKITNAMQLVSTSKLHRIINLTKNIKAYQNLVETTFDNIVSKITQEELNEIFPPKQETDATLYIIVTSDIGLCGSYNSNVINELKKVIKPSDLVITLGTKGLNWIRVSKFKDQLYKAYVNLEDKLDYSIATEIGNLNFELFAKNKISSCKIIYTKFVNNLIQEVSVKQLFPYDSSHLEIKKESEQMEGDIEFEPSAEIILQRAFPLYVSSMIYVLVSLSKVSELASRRVAMESATDNADEIINDLNLEYNSKRQSVITQEITEIVAGAQATN</sequence>
<comment type="function">
    <text evidence="1">Produces ATP from ADP in the presence of a proton gradient across the membrane. The gamma chain is believed to be important in regulating ATPase activity and the flow of protons through the CF(0) complex.</text>
</comment>
<comment type="subunit">
    <text evidence="1">F-type ATPases have 2 components, CF(1) - the catalytic core - and CF(0) - the membrane proton channel. CF(1) has five subunits: alpha(3), beta(3), gamma(1), delta(1), epsilon(1). CF(0) has three main subunits: a, b and c.</text>
</comment>
<comment type="subcellular location">
    <subcellularLocation>
        <location evidence="1">Cell membrane</location>
        <topology evidence="1">Peripheral membrane protein</topology>
    </subcellularLocation>
</comment>
<comment type="similarity">
    <text evidence="1">Belongs to the ATPase gamma chain family.</text>
</comment>
<proteinExistence type="inferred from homology"/>
<gene>
    <name evidence="1" type="primary">atpG</name>
    <name type="ordered locus">MS53_0406</name>
</gene>
<keyword id="KW-0066">ATP synthesis</keyword>
<keyword id="KW-1003">Cell membrane</keyword>
<keyword id="KW-0139">CF(1)</keyword>
<keyword id="KW-0375">Hydrogen ion transport</keyword>
<keyword id="KW-0406">Ion transport</keyword>
<keyword id="KW-0472">Membrane</keyword>
<keyword id="KW-1185">Reference proteome</keyword>
<keyword id="KW-0813">Transport</keyword>
<dbReference type="EMBL" id="AE017245">
    <property type="protein sequence ID" value="AAZ43818.1"/>
    <property type="molecule type" value="Genomic_DNA"/>
</dbReference>
<dbReference type="RefSeq" id="WP_011283549.1">
    <property type="nucleotide sequence ID" value="NC_007294.1"/>
</dbReference>
<dbReference type="SMR" id="Q4A603"/>
<dbReference type="STRING" id="262723.MS53_0406"/>
<dbReference type="KEGG" id="msy:MS53_0406"/>
<dbReference type="eggNOG" id="COG0224">
    <property type="taxonomic scope" value="Bacteria"/>
</dbReference>
<dbReference type="HOGENOM" id="CLU_050669_0_1_14"/>
<dbReference type="OrthoDB" id="9812769at2"/>
<dbReference type="Proteomes" id="UP000000549">
    <property type="component" value="Chromosome"/>
</dbReference>
<dbReference type="GO" id="GO:0005886">
    <property type="term" value="C:plasma membrane"/>
    <property type="evidence" value="ECO:0007669"/>
    <property type="project" value="UniProtKB-SubCell"/>
</dbReference>
<dbReference type="GO" id="GO:0045259">
    <property type="term" value="C:proton-transporting ATP synthase complex"/>
    <property type="evidence" value="ECO:0007669"/>
    <property type="project" value="UniProtKB-KW"/>
</dbReference>
<dbReference type="GO" id="GO:0005524">
    <property type="term" value="F:ATP binding"/>
    <property type="evidence" value="ECO:0007669"/>
    <property type="project" value="UniProtKB-UniRule"/>
</dbReference>
<dbReference type="GO" id="GO:0046933">
    <property type="term" value="F:proton-transporting ATP synthase activity, rotational mechanism"/>
    <property type="evidence" value="ECO:0007669"/>
    <property type="project" value="UniProtKB-UniRule"/>
</dbReference>
<dbReference type="GO" id="GO:0042777">
    <property type="term" value="P:proton motive force-driven plasma membrane ATP synthesis"/>
    <property type="evidence" value="ECO:0007669"/>
    <property type="project" value="UniProtKB-UniRule"/>
</dbReference>
<dbReference type="CDD" id="cd12151">
    <property type="entry name" value="F1-ATPase_gamma"/>
    <property type="match status" value="1"/>
</dbReference>
<dbReference type="Gene3D" id="3.40.1380.10">
    <property type="match status" value="1"/>
</dbReference>
<dbReference type="Gene3D" id="1.10.287.80">
    <property type="entry name" value="ATP synthase, gamma subunit, helix hairpin domain"/>
    <property type="match status" value="1"/>
</dbReference>
<dbReference type="HAMAP" id="MF_00815">
    <property type="entry name" value="ATP_synth_gamma_bact"/>
    <property type="match status" value="1"/>
</dbReference>
<dbReference type="InterPro" id="IPR035968">
    <property type="entry name" value="ATP_synth_F1_ATPase_gsu"/>
</dbReference>
<dbReference type="InterPro" id="IPR000131">
    <property type="entry name" value="ATP_synth_F1_gsu"/>
</dbReference>
<dbReference type="InterPro" id="IPR023632">
    <property type="entry name" value="ATP_synth_F1_gsu_CS"/>
</dbReference>
<dbReference type="NCBIfam" id="TIGR01146">
    <property type="entry name" value="ATPsyn_F1gamma"/>
    <property type="match status" value="1"/>
</dbReference>
<dbReference type="PANTHER" id="PTHR11693">
    <property type="entry name" value="ATP SYNTHASE GAMMA CHAIN"/>
    <property type="match status" value="1"/>
</dbReference>
<dbReference type="PANTHER" id="PTHR11693:SF22">
    <property type="entry name" value="ATP SYNTHASE SUBUNIT GAMMA, MITOCHONDRIAL"/>
    <property type="match status" value="1"/>
</dbReference>
<dbReference type="Pfam" id="PF00231">
    <property type="entry name" value="ATP-synt"/>
    <property type="match status" value="1"/>
</dbReference>
<dbReference type="PRINTS" id="PR00126">
    <property type="entry name" value="ATPASEGAMMA"/>
</dbReference>
<dbReference type="SUPFAM" id="SSF52943">
    <property type="entry name" value="ATP synthase (F1-ATPase), gamma subunit"/>
    <property type="match status" value="1"/>
</dbReference>
<dbReference type="PROSITE" id="PS00153">
    <property type="entry name" value="ATPASE_GAMMA"/>
    <property type="match status" value="1"/>
</dbReference>
<accession>Q4A603</accession>